<proteinExistence type="predicted"/>
<dbReference type="EMBL" id="X05817">
    <property type="status" value="NOT_ANNOTATED_CDS"/>
    <property type="molecule type" value="Genomic_DNA"/>
</dbReference>
<dbReference type="PIR" id="G27129">
    <property type="entry name" value="W4WLB4"/>
</dbReference>
<dbReference type="Proteomes" id="UP000007613">
    <property type="component" value="Segment"/>
</dbReference>
<accession>P08347</accession>
<name>VE4_BPV4</name>
<organismHost>
    <name type="scientific">Bos taurus</name>
    <name type="common">Bovine</name>
    <dbReference type="NCBI Taxonomy" id="9913"/>
</organismHost>
<protein>
    <recommendedName>
        <fullName>Probable protein E4</fullName>
    </recommendedName>
</protein>
<gene>
    <name type="primary">E4</name>
</gene>
<sequence>KQSSFSLCYQFASCWEIRRTTRVPKPGTQPEDDDDRPPIFQRRPGPAAEGAVVFAIAITVTITIAYEGAALQWTRHAATESRETPGRKTKGHPRTGTMPWNTDSANS</sequence>
<keyword id="KW-0244">Early protein</keyword>
<reference key="1">
    <citation type="journal article" date="1987" name="J. Gen. Virol.">
        <title>The nucleotide sequence and genome organization of bovine papillomavirus type 4.</title>
        <authorList>
            <person name="Patel K.R."/>
            <person name="Smith K.T."/>
            <person name="Campo M.S."/>
        </authorList>
    </citation>
    <scope>NUCLEOTIDE SEQUENCE [GENOMIC DNA]</scope>
</reference>
<evidence type="ECO:0000256" key="1">
    <source>
        <dbReference type="SAM" id="MobiDB-lite"/>
    </source>
</evidence>
<organism>
    <name type="scientific">Bos taurus papillomavirus 4</name>
    <name type="common">Bovine papillomavirus 4</name>
    <dbReference type="NCBI Taxonomy" id="10562"/>
    <lineage>
        <taxon>Viruses</taxon>
        <taxon>Monodnaviria</taxon>
        <taxon>Shotokuvirae</taxon>
        <taxon>Cossaviricota</taxon>
        <taxon>Papovaviricetes</taxon>
        <taxon>Zurhausenvirales</taxon>
        <taxon>Papillomaviridae</taxon>
        <taxon>Firstpapillomavirinae</taxon>
        <taxon>Xipapillomavirus</taxon>
        <taxon>Xipapillomavirus 1</taxon>
    </lineage>
</organism>
<feature type="chain" id="PRO_0000133253" description="Probable protein E4">
    <location>
        <begin position="1"/>
        <end position="107"/>
    </location>
</feature>
<feature type="region of interest" description="Disordered" evidence="1">
    <location>
        <begin position="20"/>
        <end position="46"/>
    </location>
</feature>
<feature type="region of interest" description="Disordered" evidence="1">
    <location>
        <begin position="75"/>
        <end position="107"/>
    </location>
</feature>
<feature type="compositionally biased region" description="Basic and acidic residues" evidence="1">
    <location>
        <begin position="77"/>
        <end position="86"/>
    </location>
</feature>
<feature type="compositionally biased region" description="Polar residues" evidence="1">
    <location>
        <begin position="98"/>
        <end position="107"/>
    </location>
</feature>